<gene>
    <name evidence="1" type="primary">ruvC</name>
    <name type="ordered locus">VV2287</name>
</gene>
<name>RUVC_VIBVY</name>
<comment type="function">
    <text evidence="1">The RuvA-RuvB-RuvC complex processes Holliday junction (HJ) DNA during genetic recombination and DNA repair. Endonuclease that resolves HJ intermediates. Cleaves cruciform DNA by making single-stranded nicks across the HJ at symmetrical positions within the homologous arms, yielding a 5'-phosphate and a 3'-hydroxyl group; requires a central core of homology in the junction. The consensus cleavage sequence is 5'-(A/T)TT(C/G)-3'. Cleavage occurs on the 3'-side of the TT dinucleotide at the point of strand exchange. HJ branch migration catalyzed by RuvA-RuvB allows RuvC to scan DNA until it finds its consensus sequence, where it cleaves and resolves the cruciform DNA.</text>
</comment>
<comment type="catalytic activity">
    <reaction evidence="1">
        <text>Endonucleolytic cleavage at a junction such as a reciprocal single-stranded crossover between two homologous DNA duplexes (Holliday junction).</text>
        <dbReference type="EC" id="3.1.21.10"/>
    </reaction>
</comment>
<comment type="cofactor">
    <cofactor evidence="1">
        <name>Mg(2+)</name>
        <dbReference type="ChEBI" id="CHEBI:18420"/>
    </cofactor>
    <text evidence="1">Binds 2 Mg(2+) ion per subunit.</text>
</comment>
<comment type="subunit">
    <text evidence="1">Homodimer which binds Holliday junction (HJ) DNA. The HJ becomes 2-fold symmetrical on binding to RuvC with unstacked arms; it has a different conformation from HJ DNA in complex with RuvA. In the full resolvosome a probable DNA-RuvA(4)-RuvB(12)-RuvC(2) complex forms which resolves the HJ.</text>
</comment>
<comment type="subcellular location">
    <subcellularLocation>
        <location evidence="1">Cytoplasm</location>
    </subcellularLocation>
</comment>
<comment type="similarity">
    <text evidence="1">Belongs to the RuvC family.</text>
</comment>
<sequence length="173" mass="18464">MSIILGIDPGSRVTGYGVIRQNGRHLQYLGSGCIRTSEKDLPGRLKQIYAGVTEIITQFQPDVFAIEQVFMAKNADSALKLGQARGAAIVSAVNHDLPVYEYAARLIKQAVVGTGGADKAQVQHMVQHMLKLPAKPQADAADALGVAICHANTNKTLIALAGQATSAKRGRYR</sequence>
<organism>
    <name type="scientific">Vibrio vulnificus (strain YJ016)</name>
    <dbReference type="NCBI Taxonomy" id="196600"/>
    <lineage>
        <taxon>Bacteria</taxon>
        <taxon>Pseudomonadati</taxon>
        <taxon>Pseudomonadota</taxon>
        <taxon>Gammaproteobacteria</taxon>
        <taxon>Vibrionales</taxon>
        <taxon>Vibrionaceae</taxon>
        <taxon>Vibrio</taxon>
    </lineage>
</organism>
<dbReference type="EC" id="3.1.21.10" evidence="1"/>
<dbReference type="EMBL" id="BA000037">
    <property type="protein sequence ID" value="BAC95051.1"/>
    <property type="molecule type" value="Genomic_DNA"/>
</dbReference>
<dbReference type="RefSeq" id="WP_011150789.1">
    <property type="nucleotide sequence ID" value="NC_005139.1"/>
</dbReference>
<dbReference type="SMR" id="Q7MJ75"/>
<dbReference type="STRING" id="672.VV93_v1c19970"/>
<dbReference type="KEGG" id="vvy:VV2287"/>
<dbReference type="PATRIC" id="fig|196600.6.peg.2298"/>
<dbReference type="eggNOG" id="COG0817">
    <property type="taxonomic scope" value="Bacteria"/>
</dbReference>
<dbReference type="HOGENOM" id="CLU_091257_2_1_6"/>
<dbReference type="Proteomes" id="UP000002675">
    <property type="component" value="Chromosome I"/>
</dbReference>
<dbReference type="GO" id="GO:0005737">
    <property type="term" value="C:cytoplasm"/>
    <property type="evidence" value="ECO:0007669"/>
    <property type="project" value="UniProtKB-SubCell"/>
</dbReference>
<dbReference type="GO" id="GO:0048476">
    <property type="term" value="C:Holliday junction resolvase complex"/>
    <property type="evidence" value="ECO:0007669"/>
    <property type="project" value="UniProtKB-UniRule"/>
</dbReference>
<dbReference type="GO" id="GO:0008821">
    <property type="term" value="F:crossover junction DNA endonuclease activity"/>
    <property type="evidence" value="ECO:0007669"/>
    <property type="project" value="UniProtKB-UniRule"/>
</dbReference>
<dbReference type="GO" id="GO:0003677">
    <property type="term" value="F:DNA binding"/>
    <property type="evidence" value="ECO:0007669"/>
    <property type="project" value="UniProtKB-KW"/>
</dbReference>
<dbReference type="GO" id="GO:0000287">
    <property type="term" value="F:magnesium ion binding"/>
    <property type="evidence" value="ECO:0007669"/>
    <property type="project" value="UniProtKB-UniRule"/>
</dbReference>
<dbReference type="GO" id="GO:0006310">
    <property type="term" value="P:DNA recombination"/>
    <property type="evidence" value="ECO:0007669"/>
    <property type="project" value="UniProtKB-UniRule"/>
</dbReference>
<dbReference type="GO" id="GO:0006281">
    <property type="term" value="P:DNA repair"/>
    <property type="evidence" value="ECO:0007669"/>
    <property type="project" value="UniProtKB-UniRule"/>
</dbReference>
<dbReference type="CDD" id="cd16962">
    <property type="entry name" value="RuvC"/>
    <property type="match status" value="1"/>
</dbReference>
<dbReference type="FunFam" id="3.30.420.10:FF:000002">
    <property type="entry name" value="Crossover junction endodeoxyribonuclease RuvC"/>
    <property type="match status" value="1"/>
</dbReference>
<dbReference type="Gene3D" id="3.30.420.10">
    <property type="entry name" value="Ribonuclease H-like superfamily/Ribonuclease H"/>
    <property type="match status" value="1"/>
</dbReference>
<dbReference type="HAMAP" id="MF_00034">
    <property type="entry name" value="RuvC"/>
    <property type="match status" value="1"/>
</dbReference>
<dbReference type="InterPro" id="IPR012337">
    <property type="entry name" value="RNaseH-like_sf"/>
</dbReference>
<dbReference type="InterPro" id="IPR036397">
    <property type="entry name" value="RNaseH_sf"/>
</dbReference>
<dbReference type="InterPro" id="IPR020563">
    <property type="entry name" value="X-over_junc_endoDNase_Mg_BS"/>
</dbReference>
<dbReference type="InterPro" id="IPR002176">
    <property type="entry name" value="X-over_junc_endoDNase_RuvC"/>
</dbReference>
<dbReference type="NCBIfam" id="TIGR00228">
    <property type="entry name" value="ruvC"/>
    <property type="match status" value="1"/>
</dbReference>
<dbReference type="PANTHER" id="PTHR30194">
    <property type="entry name" value="CROSSOVER JUNCTION ENDODEOXYRIBONUCLEASE RUVC"/>
    <property type="match status" value="1"/>
</dbReference>
<dbReference type="PANTHER" id="PTHR30194:SF3">
    <property type="entry name" value="CROSSOVER JUNCTION ENDODEOXYRIBONUCLEASE RUVC"/>
    <property type="match status" value="1"/>
</dbReference>
<dbReference type="Pfam" id="PF02075">
    <property type="entry name" value="RuvC"/>
    <property type="match status" value="1"/>
</dbReference>
<dbReference type="PRINTS" id="PR00696">
    <property type="entry name" value="RSOLVASERUVC"/>
</dbReference>
<dbReference type="SUPFAM" id="SSF53098">
    <property type="entry name" value="Ribonuclease H-like"/>
    <property type="match status" value="1"/>
</dbReference>
<dbReference type="PROSITE" id="PS01321">
    <property type="entry name" value="RUVC"/>
    <property type="match status" value="1"/>
</dbReference>
<accession>Q7MJ75</accession>
<evidence type="ECO:0000255" key="1">
    <source>
        <dbReference type="HAMAP-Rule" id="MF_00034"/>
    </source>
</evidence>
<keyword id="KW-0963">Cytoplasm</keyword>
<keyword id="KW-0227">DNA damage</keyword>
<keyword id="KW-0233">DNA recombination</keyword>
<keyword id="KW-0234">DNA repair</keyword>
<keyword id="KW-0238">DNA-binding</keyword>
<keyword id="KW-0255">Endonuclease</keyword>
<keyword id="KW-0378">Hydrolase</keyword>
<keyword id="KW-0460">Magnesium</keyword>
<keyword id="KW-0479">Metal-binding</keyword>
<keyword id="KW-0540">Nuclease</keyword>
<feature type="chain" id="PRO_0000183146" description="Crossover junction endodeoxyribonuclease RuvC">
    <location>
        <begin position="1"/>
        <end position="173"/>
    </location>
</feature>
<feature type="active site" evidence="1">
    <location>
        <position position="8"/>
    </location>
</feature>
<feature type="active site" evidence="1">
    <location>
        <position position="67"/>
    </location>
</feature>
<feature type="active site" evidence="1">
    <location>
        <position position="139"/>
    </location>
</feature>
<feature type="binding site" evidence="1">
    <location>
        <position position="8"/>
    </location>
    <ligand>
        <name>Mg(2+)</name>
        <dbReference type="ChEBI" id="CHEBI:18420"/>
        <label>1</label>
    </ligand>
</feature>
<feature type="binding site" evidence="1">
    <location>
        <position position="67"/>
    </location>
    <ligand>
        <name>Mg(2+)</name>
        <dbReference type="ChEBI" id="CHEBI:18420"/>
        <label>2</label>
    </ligand>
</feature>
<feature type="binding site" evidence="1">
    <location>
        <position position="139"/>
    </location>
    <ligand>
        <name>Mg(2+)</name>
        <dbReference type="ChEBI" id="CHEBI:18420"/>
        <label>1</label>
    </ligand>
</feature>
<reference key="1">
    <citation type="journal article" date="2003" name="Genome Res.">
        <title>Comparative genome analysis of Vibrio vulnificus, a marine pathogen.</title>
        <authorList>
            <person name="Chen C.-Y."/>
            <person name="Wu K.-M."/>
            <person name="Chang Y.-C."/>
            <person name="Chang C.-H."/>
            <person name="Tsai H.-C."/>
            <person name="Liao T.-L."/>
            <person name="Liu Y.-M."/>
            <person name="Chen H.-J."/>
            <person name="Shen A.B.-T."/>
            <person name="Li J.-C."/>
            <person name="Su T.-L."/>
            <person name="Shao C.-P."/>
            <person name="Lee C.-T."/>
            <person name="Hor L.-I."/>
            <person name="Tsai S.-F."/>
        </authorList>
    </citation>
    <scope>NUCLEOTIDE SEQUENCE [LARGE SCALE GENOMIC DNA]</scope>
    <source>
        <strain>YJ016</strain>
    </source>
</reference>
<proteinExistence type="inferred from homology"/>
<protein>
    <recommendedName>
        <fullName evidence="1">Crossover junction endodeoxyribonuclease RuvC</fullName>
        <ecNumber evidence="1">3.1.21.10</ecNumber>
    </recommendedName>
    <alternativeName>
        <fullName evidence="1">Holliday junction nuclease RuvC</fullName>
    </alternativeName>
    <alternativeName>
        <fullName evidence="1">Holliday junction resolvase RuvC</fullName>
    </alternativeName>
</protein>